<feature type="chain" id="PRO_0000088478" description="Stage IV sporulation protein FB">
    <location>
        <begin position="1"/>
        <end position="288"/>
    </location>
</feature>
<feature type="topological domain" description="Mother cell cytoplasmic" evidence="4">
    <location>
        <begin position="1"/>
        <end position="10"/>
    </location>
</feature>
<feature type="transmembrane region" description="Helical" evidence="1">
    <location>
        <begin position="11"/>
        <end position="30"/>
    </location>
</feature>
<feature type="topological domain" description="Forespore intermembrane space" evidence="4">
    <location>
        <position position="31"/>
    </location>
</feature>
<feature type="transmembrane region" description="Helical" evidence="1">
    <location>
        <begin position="32"/>
        <end position="56"/>
    </location>
</feature>
<feature type="topological domain" description="Mother cell cytoplasmic" evidence="4">
    <location>
        <begin position="57"/>
        <end position="83"/>
    </location>
</feature>
<feature type="transmembrane region" description="Helical" evidence="1">
    <location>
        <begin position="84"/>
        <end position="105"/>
    </location>
</feature>
<feature type="topological domain" description="Forespore intermembrane space" evidence="4">
    <location>
        <begin position="106"/>
        <end position="126"/>
    </location>
</feature>
<feature type="transmembrane region" description="Helical" evidence="1">
    <location>
        <begin position="127"/>
        <end position="146"/>
    </location>
</feature>
<feature type="topological domain" description="Mother cell cytoplasmic" evidence="4">
    <location>
        <begin position="147"/>
        <end position="161"/>
    </location>
</feature>
<feature type="transmembrane region" description="Helical" evidence="1">
    <location>
        <begin position="162"/>
        <end position="178"/>
    </location>
</feature>
<feature type="topological domain" description="Forespore intermembrane space" evidence="4">
    <location>
        <position position="179"/>
    </location>
</feature>
<feature type="transmembrane region" description="Helical" evidence="1">
    <location>
        <begin position="180"/>
        <end position="199"/>
    </location>
</feature>
<feature type="topological domain" description="Mother cell cytoplasmic" evidence="4">
    <location>
        <begin position="200"/>
        <end position="288"/>
    </location>
</feature>
<feature type="active site" evidence="4">
    <location>
        <position position="44"/>
    </location>
</feature>
<feature type="binding site" evidence="4">
    <location>
        <position position="43"/>
    </location>
    <ligand>
        <name>Zn(2+)</name>
        <dbReference type="ChEBI" id="CHEBI:29105"/>
        <note>catalytic</note>
    </ligand>
</feature>
<feature type="binding site" evidence="4">
    <location>
        <position position="47"/>
    </location>
    <ligand>
        <name>Zn(2+)</name>
        <dbReference type="ChEBI" id="CHEBI:29105"/>
        <note>catalytic</note>
    </ligand>
</feature>
<feature type="binding site" evidence="4">
    <location>
        <position position="137"/>
    </location>
    <ligand>
        <name>Zn(2+)</name>
        <dbReference type="ChEBI" id="CHEBI:29105"/>
        <note>catalytic</note>
    </ligand>
</feature>
<feature type="mutagenesis site" description="Loss of activity." evidence="2">
    <original>H</original>
    <variation>F</variation>
    <location>
        <position position="43"/>
    </location>
</feature>
<feature type="mutagenesis site" description="Loss of activity." evidence="2">
    <original>E</original>
    <variation>A</variation>
    <variation>Q</variation>
    <location>
        <position position="44"/>
    </location>
</feature>
<feature type="mutagenesis site" description="Partial activity." evidence="2">
    <original>E</original>
    <variation>D</variation>
    <location>
        <position position="44"/>
    </location>
</feature>
<feature type="mutagenesis site" description="Loss of activity." evidence="2">
    <original>H</original>
    <variation>F</variation>
    <location>
        <position position="47"/>
    </location>
</feature>
<feature type="helix" evidence="5">
    <location>
        <begin position="2"/>
        <end position="9"/>
    </location>
</feature>
<feature type="helix" evidence="5">
    <location>
        <begin position="15"/>
        <end position="25"/>
    </location>
</feature>
<feature type="turn" evidence="5">
    <location>
        <begin position="26"/>
        <end position="28"/>
    </location>
</feature>
<feature type="helix" evidence="5">
    <location>
        <begin position="30"/>
        <end position="53"/>
    </location>
</feature>
<feature type="strand" evidence="5">
    <location>
        <begin position="58"/>
        <end position="64"/>
    </location>
</feature>
<feature type="strand" evidence="5">
    <location>
        <begin position="67"/>
        <end position="72"/>
    </location>
</feature>
<feature type="helix" evidence="5">
    <location>
        <begin position="80"/>
        <end position="88"/>
    </location>
</feature>
<feature type="helix" evidence="5">
    <location>
        <begin position="91"/>
        <end position="93"/>
    </location>
</feature>
<feature type="helix" evidence="5">
    <location>
        <begin position="94"/>
        <end position="106"/>
    </location>
</feature>
<feature type="helix" evidence="5">
    <location>
        <begin position="112"/>
        <end position="129"/>
    </location>
</feature>
<feature type="strand" evidence="5">
    <location>
        <begin position="131"/>
        <end position="135"/>
    </location>
</feature>
<feature type="turn" evidence="5">
    <location>
        <begin position="136"/>
        <end position="138"/>
    </location>
</feature>
<feature type="helix" evidence="5">
    <location>
        <begin position="139"/>
        <end position="149"/>
    </location>
</feature>
<feature type="helix" evidence="5">
    <location>
        <begin position="152"/>
        <end position="177"/>
    </location>
</feature>
<feature type="helix" evidence="5">
    <location>
        <begin position="182"/>
        <end position="199"/>
    </location>
</feature>
<feature type="helix" evidence="5">
    <location>
        <begin position="202"/>
        <end position="214"/>
    </location>
</feature>
<feature type="strand" evidence="5">
    <location>
        <begin position="227"/>
        <end position="230"/>
    </location>
</feature>
<feature type="helix" evidence="5">
    <location>
        <begin position="235"/>
        <end position="239"/>
    </location>
</feature>
<feature type="strand" evidence="5">
    <location>
        <begin position="250"/>
        <end position="254"/>
    </location>
</feature>
<feature type="strand" evidence="5">
    <location>
        <begin position="257"/>
        <end position="262"/>
    </location>
</feature>
<feature type="helix" evidence="5">
    <location>
        <begin position="264"/>
        <end position="273"/>
    </location>
</feature>
<feature type="strand" evidence="5">
    <location>
        <begin position="277"/>
        <end position="279"/>
    </location>
</feature>
<feature type="strand" evidence="5">
    <location>
        <begin position="284"/>
        <end position="286"/>
    </location>
</feature>
<dbReference type="EC" id="3.4.24.-"/>
<dbReference type="EMBL" id="X59528">
    <property type="protein sequence ID" value="CAA42107.1"/>
    <property type="molecule type" value="Genomic_DNA"/>
</dbReference>
<dbReference type="EMBL" id="AL009126">
    <property type="protein sequence ID" value="CAB14757.1"/>
    <property type="molecule type" value="Genomic_DNA"/>
</dbReference>
<dbReference type="PIR" id="S18438">
    <property type="entry name" value="S18438"/>
</dbReference>
<dbReference type="RefSeq" id="NP_390675.1">
    <property type="nucleotide sequence ID" value="NC_000964.3"/>
</dbReference>
<dbReference type="RefSeq" id="WP_004398649.1">
    <property type="nucleotide sequence ID" value="NZ_OZ025638.1"/>
</dbReference>
<dbReference type="PDB" id="8VJL">
    <property type="method" value="EM"/>
    <property type="resolution" value="3.50 A"/>
    <property type="chains" value="A/C/E/G=1-288"/>
</dbReference>
<dbReference type="PDB" id="8VJM">
    <property type="method" value="EM"/>
    <property type="resolution" value="4.00 A"/>
    <property type="chains" value="A/C=1-288"/>
</dbReference>
<dbReference type="PDBsum" id="8VJL"/>
<dbReference type="PDBsum" id="8VJM"/>
<dbReference type="EMDB" id="EMD-43288"/>
<dbReference type="EMDB" id="EMD-43289"/>
<dbReference type="SMR" id="P26937"/>
<dbReference type="DIP" id="DIP-48963N"/>
<dbReference type="FunCoup" id="P26937">
    <property type="interactions" value="54"/>
</dbReference>
<dbReference type="IntAct" id="P26937">
    <property type="interactions" value="1"/>
</dbReference>
<dbReference type="STRING" id="224308.BSU27970"/>
<dbReference type="MEROPS" id="M50.002"/>
<dbReference type="TCDB" id="9.B.149.1.13">
    <property type="family name" value="the m50 peptidase (m50-p) family"/>
</dbReference>
<dbReference type="PaxDb" id="224308-BSU27970"/>
<dbReference type="EnsemblBacteria" id="CAB14757">
    <property type="protein sequence ID" value="CAB14757"/>
    <property type="gene ID" value="BSU_27970"/>
</dbReference>
<dbReference type="GeneID" id="937505"/>
<dbReference type="KEGG" id="bsu:BSU27970"/>
<dbReference type="PATRIC" id="fig|224308.179.peg.3039"/>
<dbReference type="eggNOG" id="COG1994">
    <property type="taxonomic scope" value="Bacteria"/>
</dbReference>
<dbReference type="InParanoid" id="P26937"/>
<dbReference type="OrthoDB" id="166377at2"/>
<dbReference type="PhylomeDB" id="P26937"/>
<dbReference type="BioCyc" id="BSUB:BSU27970-MONOMER"/>
<dbReference type="BRENDA" id="3.4.21.116">
    <property type="organism ID" value="658"/>
</dbReference>
<dbReference type="BRENDA" id="3.4.24.B23">
    <property type="organism ID" value="658"/>
</dbReference>
<dbReference type="Proteomes" id="UP000001570">
    <property type="component" value="Chromosome"/>
</dbReference>
<dbReference type="GO" id="GO:0016020">
    <property type="term" value="C:membrane"/>
    <property type="evidence" value="ECO:0007669"/>
    <property type="project" value="UniProtKB-KW"/>
</dbReference>
<dbReference type="GO" id="GO:0046872">
    <property type="term" value="F:metal ion binding"/>
    <property type="evidence" value="ECO:0007669"/>
    <property type="project" value="UniProtKB-KW"/>
</dbReference>
<dbReference type="GO" id="GO:0008237">
    <property type="term" value="F:metallopeptidase activity"/>
    <property type="evidence" value="ECO:0007669"/>
    <property type="project" value="UniProtKB-KW"/>
</dbReference>
<dbReference type="GO" id="GO:0006508">
    <property type="term" value="P:proteolysis"/>
    <property type="evidence" value="ECO:0007669"/>
    <property type="project" value="UniProtKB-KW"/>
</dbReference>
<dbReference type="GO" id="GO:0030435">
    <property type="term" value="P:sporulation resulting in formation of a cellular spore"/>
    <property type="evidence" value="ECO:0007669"/>
    <property type="project" value="UniProtKB-KW"/>
</dbReference>
<dbReference type="CDD" id="cd06161">
    <property type="entry name" value="S2P-M50_SpoIVFB"/>
    <property type="match status" value="1"/>
</dbReference>
<dbReference type="InterPro" id="IPR008915">
    <property type="entry name" value="Peptidase_M50"/>
</dbReference>
<dbReference type="PANTHER" id="PTHR39188">
    <property type="entry name" value="MEMBRANE-ASSOCIATED ZINC METALLOPROTEASE M50B"/>
    <property type="match status" value="1"/>
</dbReference>
<dbReference type="PANTHER" id="PTHR39188:SF3">
    <property type="entry name" value="STAGE IV SPORULATION PROTEIN FB"/>
    <property type="match status" value="1"/>
</dbReference>
<dbReference type="Pfam" id="PF02163">
    <property type="entry name" value="Peptidase_M50"/>
    <property type="match status" value="2"/>
</dbReference>
<organism>
    <name type="scientific">Bacillus subtilis (strain 168)</name>
    <dbReference type="NCBI Taxonomy" id="224308"/>
    <lineage>
        <taxon>Bacteria</taxon>
        <taxon>Bacillati</taxon>
        <taxon>Bacillota</taxon>
        <taxon>Bacilli</taxon>
        <taxon>Bacillales</taxon>
        <taxon>Bacillaceae</taxon>
        <taxon>Bacillus</taxon>
    </lineage>
</organism>
<keyword id="KW-0002">3D-structure</keyword>
<keyword id="KW-0378">Hydrolase</keyword>
<keyword id="KW-0472">Membrane</keyword>
<keyword id="KW-0479">Metal-binding</keyword>
<keyword id="KW-0482">Metalloprotease</keyword>
<keyword id="KW-0645">Protease</keyword>
<keyword id="KW-1185">Reference proteome</keyword>
<keyword id="KW-0749">Sporulation</keyword>
<keyword id="KW-0812">Transmembrane</keyword>
<keyword id="KW-1133">Transmembrane helix</keyword>
<keyword id="KW-0862">Zinc</keyword>
<name>SP4FB_BACSU</name>
<proteinExistence type="evidence at protein level"/>
<accession>P26937</accession>
<evidence type="ECO:0000255" key="1"/>
<evidence type="ECO:0000269" key="2">
    <source>
    </source>
</evidence>
<evidence type="ECO:0000269" key="3">
    <source>
    </source>
</evidence>
<evidence type="ECO:0000305" key="4"/>
<evidence type="ECO:0007829" key="5">
    <source>
        <dbReference type="PDB" id="8VJL"/>
    </source>
</evidence>
<reference key="1">
    <citation type="journal article" date="1991" name="J. Mol. Biol.">
        <title>Sporulation operon spoIVF and the characterization of mutations that uncouple mother-cell from forespore gene expression in Bacillus subtilis.</title>
        <authorList>
            <person name="Cutting S.M."/>
            <person name="Roels S."/>
            <person name="Losick R."/>
        </authorList>
    </citation>
    <scope>NUCLEOTIDE SEQUENCE [GENOMIC DNA]</scope>
    <source>
        <strain>168</strain>
    </source>
</reference>
<reference key="2">
    <citation type="journal article" date="1997" name="Nature">
        <title>The complete genome sequence of the Gram-positive bacterium Bacillus subtilis.</title>
        <authorList>
            <person name="Kunst F."/>
            <person name="Ogasawara N."/>
            <person name="Moszer I."/>
            <person name="Albertini A.M."/>
            <person name="Alloni G."/>
            <person name="Azevedo V."/>
            <person name="Bertero M.G."/>
            <person name="Bessieres P."/>
            <person name="Bolotin A."/>
            <person name="Borchert S."/>
            <person name="Borriss R."/>
            <person name="Boursier L."/>
            <person name="Brans A."/>
            <person name="Braun M."/>
            <person name="Brignell S.C."/>
            <person name="Bron S."/>
            <person name="Brouillet S."/>
            <person name="Bruschi C.V."/>
            <person name="Caldwell B."/>
            <person name="Capuano V."/>
            <person name="Carter N.M."/>
            <person name="Choi S.-K."/>
            <person name="Codani J.-J."/>
            <person name="Connerton I.F."/>
            <person name="Cummings N.J."/>
            <person name="Daniel R.A."/>
            <person name="Denizot F."/>
            <person name="Devine K.M."/>
            <person name="Duesterhoeft A."/>
            <person name="Ehrlich S.D."/>
            <person name="Emmerson P.T."/>
            <person name="Entian K.-D."/>
            <person name="Errington J."/>
            <person name="Fabret C."/>
            <person name="Ferrari E."/>
            <person name="Foulger D."/>
            <person name="Fritz C."/>
            <person name="Fujita M."/>
            <person name="Fujita Y."/>
            <person name="Fuma S."/>
            <person name="Galizzi A."/>
            <person name="Galleron N."/>
            <person name="Ghim S.-Y."/>
            <person name="Glaser P."/>
            <person name="Goffeau A."/>
            <person name="Golightly E.J."/>
            <person name="Grandi G."/>
            <person name="Guiseppi G."/>
            <person name="Guy B.J."/>
            <person name="Haga K."/>
            <person name="Haiech J."/>
            <person name="Harwood C.R."/>
            <person name="Henaut A."/>
            <person name="Hilbert H."/>
            <person name="Holsappel S."/>
            <person name="Hosono S."/>
            <person name="Hullo M.-F."/>
            <person name="Itaya M."/>
            <person name="Jones L.-M."/>
            <person name="Joris B."/>
            <person name="Karamata D."/>
            <person name="Kasahara Y."/>
            <person name="Klaerr-Blanchard M."/>
            <person name="Klein C."/>
            <person name="Kobayashi Y."/>
            <person name="Koetter P."/>
            <person name="Koningstein G."/>
            <person name="Krogh S."/>
            <person name="Kumano M."/>
            <person name="Kurita K."/>
            <person name="Lapidus A."/>
            <person name="Lardinois S."/>
            <person name="Lauber J."/>
            <person name="Lazarevic V."/>
            <person name="Lee S.-M."/>
            <person name="Levine A."/>
            <person name="Liu H."/>
            <person name="Masuda S."/>
            <person name="Mauel C."/>
            <person name="Medigue C."/>
            <person name="Medina N."/>
            <person name="Mellado R.P."/>
            <person name="Mizuno M."/>
            <person name="Moestl D."/>
            <person name="Nakai S."/>
            <person name="Noback M."/>
            <person name="Noone D."/>
            <person name="O'Reilly M."/>
            <person name="Ogawa K."/>
            <person name="Ogiwara A."/>
            <person name="Oudega B."/>
            <person name="Park S.-H."/>
            <person name="Parro V."/>
            <person name="Pohl T.M."/>
            <person name="Portetelle D."/>
            <person name="Porwollik S."/>
            <person name="Prescott A.M."/>
            <person name="Presecan E."/>
            <person name="Pujic P."/>
            <person name="Purnelle B."/>
            <person name="Rapoport G."/>
            <person name="Rey M."/>
            <person name="Reynolds S."/>
            <person name="Rieger M."/>
            <person name="Rivolta C."/>
            <person name="Rocha E."/>
            <person name="Roche B."/>
            <person name="Rose M."/>
            <person name="Sadaie Y."/>
            <person name="Sato T."/>
            <person name="Scanlan E."/>
            <person name="Schleich S."/>
            <person name="Schroeter R."/>
            <person name="Scoffone F."/>
            <person name="Sekiguchi J."/>
            <person name="Sekowska A."/>
            <person name="Seror S.J."/>
            <person name="Serror P."/>
            <person name="Shin B.-S."/>
            <person name="Soldo B."/>
            <person name="Sorokin A."/>
            <person name="Tacconi E."/>
            <person name="Takagi T."/>
            <person name="Takahashi H."/>
            <person name="Takemaru K."/>
            <person name="Takeuchi M."/>
            <person name="Tamakoshi A."/>
            <person name="Tanaka T."/>
            <person name="Terpstra P."/>
            <person name="Tognoni A."/>
            <person name="Tosato V."/>
            <person name="Uchiyama S."/>
            <person name="Vandenbol M."/>
            <person name="Vannier F."/>
            <person name="Vassarotti A."/>
            <person name="Viari A."/>
            <person name="Wambutt R."/>
            <person name="Wedler E."/>
            <person name="Wedler H."/>
            <person name="Weitzenegger T."/>
            <person name="Winters P."/>
            <person name="Wipat A."/>
            <person name="Yamamoto H."/>
            <person name="Yamane K."/>
            <person name="Yasumoto K."/>
            <person name="Yata K."/>
            <person name="Yoshida K."/>
            <person name="Yoshikawa H.-F."/>
            <person name="Zumstein E."/>
            <person name="Yoshikawa H."/>
            <person name="Danchin A."/>
        </authorList>
    </citation>
    <scope>NUCLEOTIDE SEQUENCE [LARGE SCALE GENOMIC DNA]</scope>
    <source>
        <strain>168</strain>
    </source>
</reference>
<reference key="3">
    <citation type="journal article" date="2000" name="J. Bacteriol.">
        <title>Evidence that SpoIVFB is a novel type of membrane metalloprotease governing intercompartmental communication during Bacillus subtilis sporulation.</title>
        <authorList>
            <person name="Yu Y.-T."/>
            <person name="Kroos L."/>
        </authorList>
    </citation>
    <scope>MUTAGENESIS OF HIS-43; GLU-44 AND HIS-47</scope>
</reference>
<reference key="4">
    <citation type="journal article" date="2002" name="Genes Dev.">
        <title>A sporulation membrane protein tethers the pro-sigmaK processing enzyme to its inhibitor and dictates its subcellular localization.</title>
        <authorList>
            <person name="Rudner D.Z."/>
            <person name="Losick R."/>
        </authorList>
    </citation>
    <scope>SUBUNIT</scope>
</reference>
<reference key="5">
    <citation type="journal article" date="2004" name="Proc. Natl. Acad. Sci. U.S.A.">
        <title>BofA protein inhibits intramembrane proteolysis of pro-sigmaK in an intercompartmental signaling pathway during Bacillus subtilis sporulation.</title>
        <authorList>
            <person name="Zhou R."/>
            <person name="Kroos L."/>
        </authorList>
    </citation>
    <scope>INHIBITION BY BOFA</scope>
</reference>
<sequence>MNKWLDLILKIHVHPFLWIIAALGLLTGHMKALLCLLLIVLIHELGHAALAVFFSWRIKRVFLLPFGGTVEVEEHGNRPLKEEFAVIIAGPLQHIWLQFAAWMLAEVSVIHQHTFELFTFYNLSILFVNLLPIWPLDGGKLLFLLFSKQLPFQKAHRLNLKTSLCFCLLLGCWVLFVIPLQISAWVLFVFLAVSLFEEYRQRHYIHVRFLLERYYGKNRELEKLLPLTVKAEDKVYHVMAEFKRGCKHPIIIEKSGQKLSQLDENEVLHAYFADKRTNSSMEELLLPY</sequence>
<comment type="function">
    <text>Implicated in the coupling of mother cell to forespore gene expression. Required for spore formation. Processes the pro-sigma K factor.</text>
</comment>
<comment type="cofactor">
    <cofactor evidence="4">
        <name>Zn(2+)</name>
        <dbReference type="ChEBI" id="CHEBI:29105"/>
    </cofactor>
    <text evidence="4">Binds 1 zinc ion per subunit.</text>
</comment>
<comment type="subunit">
    <text evidence="3">Forms a complex with SpoIVFA and BofA localized in the mother-cell membrane surrounding the forespore.</text>
</comment>
<comment type="interaction">
    <interactant intactId="EBI-15806037">
        <id>P26937</id>
    </interactant>
    <interactant intactId="EBI-15806052">
        <id>P12254</id>
        <label>sigK</label>
    </interactant>
    <organismsDiffer>false</organismsDiffer>
    <experiments>2</experiments>
</comment>
<comment type="subcellular location">
    <subcellularLocation>
        <location evidence="4">Forespore outer membrane</location>
        <topology evidence="4">Multi-pass membrane protein</topology>
    </subcellularLocation>
</comment>
<comment type="developmental stage">
    <text>Transcribed during the stage II, but not required until stage IV of sporulation.</text>
</comment>
<comment type="miscellaneous">
    <text>Could be held inactive when BofA provides a fourth zinc ligand, preventing access to a water molecule and the sequence of pro sigma-K.</text>
</comment>
<comment type="similarity">
    <text evidence="4">Belongs to the peptidase M50B family.</text>
</comment>
<protein>
    <recommendedName>
        <fullName>Stage IV sporulation protein FB</fullName>
        <ecNumber>3.4.24.-</ecNumber>
    </recommendedName>
</protein>
<gene>
    <name type="primary">spoIVFB</name>
    <name type="synonym">bofB</name>
    <name type="ordered locus">BSU27970</name>
</gene>